<protein>
    <recommendedName>
        <fullName>Pleckstrin homology domain-containing family B member 2</fullName>
        <shortName>PH domain-containing family B member 2</shortName>
    </recommendedName>
    <alternativeName>
        <fullName>Evectin-2</fullName>
    </alternativeName>
</protein>
<reference key="1">
    <citation type="journal article" date="1999" name="Proc. Natl. Acad. Sci. U.S.A.">
        <title>Evectins: vesicular proteins that carry a pleckstrin homology domain and localize to post-Golgi membranes.</title>
        <authorList>
            <person name="Krappa R."/>
            <person name="Nguyen A."/>
            <person name="Burrola P."/>
            <person name="Deretic D."/>
            <person name="Lemke G."/>
        </authorList>
    </citation>
    <scope>NUCLEOTIDE SEQUENCE [MRNA] (ISOFORM 1)</scope>
    <scope>TISSUE SPECIFICITY</scope>
</reference>
<reference key="2">
    <citation type="journal article" date="2005" name="Science">
        <title>The transcriptional landscape of the mammalian genome.</title>
        <authorList>
            <person name="Carninci P."/>
            <person name="Kasukawa T."/>
            <person name="Katayama S."/>
            <person name="Gough J."/>
            <person name="Frith M.C."/>
            <person name="Maeda N."/>
            <person name="Oyama R."/>
            <person name="Ravasi T."/>
            <person name="Lenhard B."/>
            <person name="Wells C."/>
            <person name="Kodzius R."/>
            <person name="Shimokawa K."/>
            <person name="Bajic V.B."/>
            <person name="Brenner S.E."/>
            <person name="Batalov S."/>
            <person name="Forrest A.R."/>
            <person name="Zavolan M."/>
            <person name="Davis M.J."/>
            <person name="Wilming L.G."/>
            <person name="Aidinis V."/>
            <person name="Allen J.E."/>
            <person name="Ambesi-Impiombato A."/>
            <person name="Apweiler R."/>
            <person name="Aturaliya R.N."/>
            <person name="Bailey T.L."/>
            <person name="Bansal M."/>
            <person name="Baxter L."/>
            <person name="Beisel K.W."/>
            <person name="Bersano T."/>
            <person name="Bono H."/>
            <person name="Chalk A.M."/>
            <person name="Chiu K.P."/>
            <person name="Choudhary V."/>
            <person name="Christoffels A."/>
            <person name="Clutterbuck D.R."/>
            <person name="Crowe M.L."/>
            <person name="Dalla E."/>
            <person name="Dalrymple B.P."/>
            <person name="de Bono B."/>
            <person name="Della Gatta G."/>
            <person name="di Bernardo D."/>
            <person name="Down T."/>
            <person name="Engstrom P."/>
            <person name="Fagiolini M."/>
            <person name="Faulkner G."/>
            <person name="Fletcher C.F."/>
            <person name="Fukushima T."/>
            <person name="Furuno M."/>
            <person name="Futaki S."/>
            <person name="Gariboldi M."/>
            <person name="Georgii-Hemming P."/>
            <person name="Gingeras T.R."/>
            <person name="Gojobori T."/>
            <person name="Green R.E."/>
            <person name="Gustincich S."/>
            <person name="Harbers M."/>
            <person name="Hayashi Y."/>
            <person name="Hensch T.K."/>
            <person name="Hirokawa N."/>
            <person name="Hill D."/>
            <person name="Huminiecki L."/>
            <person name="Iacono M."/>
            <person name="Ikeo K."/>
            <person name="Iwama A."/>
            <person name="Ishikawa T."/>
            <person name="Jakt M."/>
            <person name="Kanapin A."/>
            <person name="Katoh M."/>
            <person name="Kawasawa Y."/>
            <person name="Kelso J."/>
            <person name="Kitamura H."/>
            <person name="Kitano H."/>
            <person name="Kollias G."/>
            <person name="Krishnan S.P."/>
            <person name="Kruger A."/>
            <person name="Kummerfeld S.K."/>
            <person name="Kurochkin I.V."/>
            <person name="Lareau L.F."/>
            <person name="Lazarevic D."/>
            <person name="Lipovich L."/>
            <person name="Liu J."/>
            <person name="Liuni S."/>
            <person name="McWilliam S."/>
            <person name="Madan Babu M."/>
            <person name="Madera M."/>
            <person name="Marchionni L."/>
            <person name="Matsuda H."/>
            <person name="Matsuzawa S."/>
            <person name="Miki H."/>
            <person name="Mignone F."/>
            <person name="Miyake S."/>
            <person name="Morris K."/>
            <person name="Mottagui-Tabar S."/>
            <person name="Mulder N."/>
            <person name="Nakano N."/>
            <person name="Nakauchi H."/>
            <person name="Ng P."/>
            <person name="Nilsson R."/>
            <person name="Nishiguchi S."/>
            <person name="Nishikawa S."/>
            <person name="Nori F."/>
            <person name="Ohara O."/>
            <person name="Okazaki Y."/>
            <person name="Orlando V."/>
            <person name="Pang K.C."/>
            <person name="Pavan W.J."/>
            <person name="Pavesi G."/>
            <person name="Pesole G."/>
            <person name="Petrovsky N."/>
            <person name="Piazza S."/>
            <person name="Reed J."/>
            <person name="Reid J.F."/>
            <person name="Ring B.Z."/>
            <person name="Ringwald M."/>
            <person name="Rost B."/>
            <person name="Ruan Y."/>
            <person name="Salzberg S.L."/>
            <person name="Sandelin A."/>
            <person name="Schneider C."/>
            <person name="Schoenbach C."/>
            <person name="Sekiguchi K."/>
            <person name="Semple C.A."/>
            <person name="Seno S."/>
            <person name="Sessa L."/>
            <person name="Sheng Y."/>
            <person name="Shibata Y."/>
            <person name="Shimada H."/>
            <person name="Shimada K."/>
            <person name="Silva D."/>
            <person name="Sinclair B."/>
            <person name="Sperling S."/>
            <person name="Stupka E."/>
            <person name="Sugiura K."/>
            <person name="Sultana R."/>
            <person name="Takenaka Y."/>
            <person name="Taki K."/>
            <person name="Tammoja K."/>
            <person name="Tan S.L."/>
            <person name="Tang S."/>
            <person name="Taylor M.S."/>
            <person name="Tegner J."/>
            <person name="Teichmann S.A."/>
            <person name="Ueda H.R."/>
            <person name="van Nimwegen E."/>
            <person name="Verardo R."/>
            <person name="Wei C.L."/>
            <person name="Yagi K."/>
            <person name="Yamanishi H."/>
            <person name="Zabarovsky E."/>
            <person name="Zhu S."/>
            <person name="Zimmer A."/>
            <person name="Hide W."/>
            <person name="Bult C."/>
            <person name="Grimmond S.M."/>
            <person name="Teasdale R.D."/>
            <person name="Liu E.T."/>
            <person name="Brusic V."/>
            <person name="Quackenbush J."/>
            <person name="Wahlestedt C."/>
            <person name="Mattick J.S."/>
            <person name="Hume D.A."/>
            <person name="Kai C."/>
            <person name="Sasaki D."/>
            <person name="Tomaru Y."/>
            <person name="Fukuda S."/>
            <person name="Kanamori-Katayama M."/>
            <person name="Suzuki M."/>
            <person name="Aoki J."/>
            <person name="Arakawa T."/>
            <person name="Iida J."/>
            <person name="Imamura K."/>
            <person name="Itoh M."/>
            <person name="Kato T."/>
            <person name="Kawaji H."/>
            <person name="Kawagashira N."/>
            <person name="Kawashima T."/>
            <person name="Kojima M."/>
            <person name="Kondo S."/>
            <person name="Konno H."/>
            <person name="Nakano K."/>
            <person name="Ninomiya N."/>
            <person name="Nishio T."/>
            <person name="Okada M."/>
            <person name="Plessy C."/>
            <person name="Shibata K."/>
            <person name="Shiraki T."/>
            <person name="Suzuki S."/>
            <person name="Tagami M."/>
            <person name="Waki K."/>
            <person name="Watahiki A."/>
            <person name="Okamura-Oho Y."/>
            <person name="Suzuki H."/>
            <person name="Kawai J."/>
            <person name="Hayashizaki Y."/>
        </authorList>
    </citation>
    <scope>NUCLEOTIDE SEQUENCE [LARGE SCALE MRNA] (ISOFORMS 1 AND 3)</scope>
    <source>
        <strain>C57BL/6J</strain>
        <tissue>Bone marrow</tissue>
        <tissue>Cerebellum</tissue>
        <tissue>Lung</tissue>
        <tissue>Spinal cord</tissue>
    </source>
</reference>
<reference key="3">
    <citation type="journal article" date="2004" name="Genome Res.">
        <title>The status, quality, and expansion of the NIH full-length cDNA project: the Mammalian Gene Collection (MGC).</title>
        <authorList>
            <consortium name="The MGC Project Team"/>
        </authorList>
    </citation>
    <scope>NUCLEOTIDE SEQUENCE [LARGE SCALE MRNA] (ISOFORM 2)</scope>
    <source>
        <strain>FVB/N</strain>
        <tissue>Mammary gland</tissue>
    </source>
</reference>
<reference key="4">
    <citation type="submission" date="2006-09" db="PDB data bank">
        <title>Solution structure of the PH domain of evectin-2 from mouse.</title>
        <authorList>
            <consortium name="RIKEN structural genomics initiative (RSGI)"/>
        </authorList>
    </citation>
    <scope>STRUCTURE BY NMR OF 3-110</scope>
</reference>
<name>PKHB2_MOUSE</name>
<keyword id="KW-0002">3D-structure</keyword>
<keyword id="KW-0025">Alternative splicing</keyword>
<keyword id="KW-0967">Endosome</keyword>
<keyword id="KW-0472">Membrane</keyword>
<keyword id="KW-1185">Reference proteome</keyword>
<proteinExistence type="evidence at protein level"/>
<feature type="chain" id="PRO_0000053890" description="Pleckstrin homology domain-containing family B member 2">
    <location>
        <begin position="1"/>
        <end position="221"/>
    </location>
</feature>
<feature type="domain" description="PH" evidence="2">
    <location>
        <begin position="2"/>
        <end position="109"/>
    </location>
</feature>
<feature type="binding site" evidence="1">
    <location>
        <position position="20"/>
    </location>
    <ligand>
        <name>a 1,2-diacyl-sn-glycero-3-phospho-L-serine</name>
        <dbReference type="ChEBI" id="CHEBI:57262"/>
    </ligand>
</feature>
<feature type="splice variant" id="VSP_009785" description="In isoform 3." evidence="5">
    <original>VYGQQPANQVIIRERYRDNDSDLALGMLAGAATGMALGSLFWVF</original>
    <variation>NARWLPLPVSAYSGARRRRPPFQLEVK</variation>
    <location>
        <begin position="178"/>
        <end position="221"/>
    </location>
</feature>
<feature type="splice variant" id="VSP_009786" description="In isoform 2." evidence="4">
    <original>RDNDSDLALGMLAGAATGMALGSLFWVF</original>
    <variation>QDYGVRTL</variation>
    <location>
        <begin position="194"/>
        <end position="221"/>
    </location>
</feature>
<feature type="sequence conflict" description="In Ref. 2; BAC30448." evidence="6" ref="2">
    <original>C</original>
    <variation>W</variation>
    <location>
        <position position="81"/>
    </location>
</feature>
<feature type="sequence conflict" description="In Ref. 2; BAC38413." evidence="6" ref="2">
    <original>A</original>
    <variation>G</variation>
    <location>
        <position position="136"/>
    </location>
</feature>
<feature type="strand" evidence="7">
    <location>
        <begin position="6"/>
        <end position="12"/>
    </location>
</feature>
<feature type="turn" evidence="7">
    <location>
        <begin position="14"/>
        <end position="16"/>
    </location>
</feature>
<feature type="strand" evidence="7">
    <location>
        <begin position="18"/>
        <end position="26"/>
    </location>
</feature>
<feature type="strand" evidence="7">
    <location>
        <begin position="32"/>
        <end position="37"/>
    </location>
</feature>
<feature type="strand" evidence="7">
    <location>
        <begin position="45"/>
        <end position="47"/>
    </location>
</feature>
<feature type="turn" evidence="7">
    <location>
        <begin position="49"/>
        <end position="52"/>
    </location>
</feature>
<feature type="strand" evidence="7">
    <location>
        <begin position="53"/>
        <end position="57"/>
    </location>
</feature>
<feature type="helix" evidence="7">
    <location>
        <begin position="59"/>
        <end position="61"/>
    </location>
</feature>
<feature type="strand" evidence="7">
    <location>
        <begin position="76"/>
        <end position="84"/>
    </location>
</feature>
<feature type="strand" evidence="7">
    <location>
        <begin position="86"/>
        <end position="90"/>
    </location>
</feature>
<feature type="helix" evidence="7">
    <location>
        <begin position="94"/>
        <end position="107"/>
    </location>
</feature>
<evidence type="ECO:0000250" key="1"/>
<evidence type="ECO:0000255" key="2">
    <source>
        <dbReference type="PROSITE-ProRule" id="PRU00145"/>
    </source>
</evidence>
<evidence type="ECO:0000269" key="3">
    <source>
    </source>
</evidence>
<evidence type="ECO:0000303" key="4">
    <source>
    </source>
</evidence>
<evidence type="ECO:0000303" key="5">
    <source>
    </source>
</evidence>
<evidence type="ECO:0000305" key="6"/>
<evidence type="ECO:0007829" key="7">
    <source>
        <dbReference type="PDB" id="2DHI"/>
    </source>
</evidence>
<sequence length="221" mass="24574">MAFVKSGWLLRQSTILKRWKKNWFDLWSDGHLIYYDDQTRQSIEDKVHMPVDCINIRTGHECRDIQPPDGKPRDCLLQIVCRDGKTISLCAESTDDCLAWKFTLQDSRTNTAYVGSAILSEETAVAASPPPYAAYATPTPEVYGYGPYSGAYPAGTQVVYAANGQAYAVPYQYPYAGVYGQQPANQVIIRERYRDNDSDLALGMLAGAATGMALGSLFWVF</sequence>
<accession>Q9QZC7</accession>
<accession>Q3UDH6</accession>
<accession>Q8C4I4</accession>
<accession>Q8CA27</accession>
<comment type="function">
    <text evidence="1">Involved in retrograde transport of recycling endosomes.</text>
</comment>
<comment type="subcellular location">
    <subcellularLocation>
        <location evidence="1">Recycling endosome membrane</location>
        <topology>Peripheral membrane protein</topology>
    </subcellularLocation>
    <text evidence="1">Specifically detected in tubulovesicular structures, and colocalizes with TFNR.</text>
</comment>
<comment type="alternative products">
    <event type="alternative splicing"/>
    <isoform>
        <id>Q9QZC7-1</id>
        <name>1</name>
        <sequence type="displayed"/>
    </isoform>
    <isoform>
        <id>Q9QZC7-2</id>
        <name>2</name>
        <sequence type="described" ref="VSP_009786"/>
    </isoform>
    <isoform>
        <id>Q9QZC7-3</id>
        <name>3</name>
        <sequence type="described" ref="VSP_009785"/>
    </isoform>
</comment>
<comment type="tissue specificity">
    <text evidence="3">Highly expressed in brain, retina, heart and kidney. Detected at lower levels in lung, muscle and nerve.</text>
</comment>
<comment type="developmental stage">
    <text>Highly expressed at birth and up to day 3; expressed at lower levels in embryo and adult.</text>
</comment>
<comment type="domain">
    <text evidence="1">The PH domain specifically binds phosphatidylserine, which is enriched in recycling endosome membranes, it doesn't recognize PIPs.</text>
</comment>
<organism>
    <name type="scientific">Mus musculus</name>
    <name type="common">Mouse</name>
    <dbReference type="NCBI Taxonomy" id="10090"/>
    <lineage>
        <taxon>Eukaryota</taxon>
        <taxon>Metazoa</taxon>
        <taxon>Chordata</taxon>
        <taxon>Craniata</taxon>
        <taxon>Vertebrata</taxon>
        <taxon>Euteleostomi</taxon>
        <taxon>Mammalia</taxon>
        <taxon>Eutheria</taxon>
        <taxon>Euarchontoglires</taxon>
        <taxon>Glires</taxon>
        <taxon>Rodentia</taxon>
        <taxon>Myomorpha</taxon>
        <taxon>Muroidea</taxon>
        <taxon>Muridae</taxon>
        <taxon>Murinae</taxon>
        <taxon>Mus</taxon>
        <taxon>Mus</taxon>
    </lineage>
</organism>
<dbReference type="EMBL" id="AF189817">
    <property type="protein sequence ID" value="AAF01332.1"/>
    <property type="molecule type" value="mRNA"/>
</dbReference>
<dbReference type="EMBL" id="AK039771">
    <property type="protein sequence ID" value="BAC30448.1"/>
    <property type="molecule type" value="mRNA"/>
</dbReference>
<dbReference type="EMBL" id="AK082118">
    <property type="protein sequence ID" value="BAC38413.1"/>
    <property type="molecule type" value="mRNA"/>
</dbReference>
<dbReference type="EMBL" id="AK149868">
    <property type="protein sequence ID" value="BAE29136.1"/>
    <property type="molecule type" value="mRNA"/>
</dbReference>
<dbReference type="EMBL" id="AK150074">
    <property type="protein sequence ID" value="BAE29285.1"/>
    <property type="molecule type" value="mRNA"/>
</dbReference>
<dbReference type="EMBL" id="AK166091">
    <property type="protein sequence ID" value="BAE38565.1"/>
    <property type="molecule type" value="mRNA"/>
</dbReference>
<dbReference type="EMBL" id="BC057994">
    <property type="protein sequence ID" value="AAH57994.1"/>
    <property type="molecule type" value="mRNA"/>
</dbReference>
<dbReference type="CCDS" id="CCDS14874.1">
    <molecule id="Q9QZC7-1"/>
</dbReference>
<dbReference type="CCDS" id="CCDS78558.1">
    <molecule id="Q9QZC7-3"/>
</dbReference>
<dbReference type="RefSeq" id="NP_001344354.1">
    <molecule id="Q9QZC7-1"/>
    <property type="nucleotide sequence ID" value="NM_001357425.1"/>
</dbReference>
<dbReference type="RefSeq" id="NP_663491.1">
    <molecule id="Q9QZC7-1"/>
    <property type="nucleotide sequence ID" value="NM_145516.2"/>
</dbReference>
<dbReference type="RefSeq" id="NP_780630.1">
    <molecule id="Q9QZC7-3"/>
    <property type="nucleotide sequence ID" value="NM_175421.1"/>
</dbReference>
<dbReference type="RefSeq" id="XP_006495961.1">
    <molecule id="Q9QZC7-1"/>
    <property type="nucleotide sequence ID" value="XM_006495898.3"/>
</dbReference>
<dbReference type="RefSeq" id="XP_017175721.1">
    <property type="nucleotide sequence ID" value="XM_017320232.1"/>
</dbReference>
<dbReference type="PDB" id="2DHI">
    <property type="method" value="NMR"/>
    <property type="chains" value="A=3-109"/>
</dbReference>
<dbReference type="PDBsum" id="2DHI"/>
<dbReference type="SMR" id="Q9QZC7"/>
<dbReference type="FunCoup" id="Q9QZC7">
    <property type="interactions" value="668"/>
</dbReference>
<dbReference type="STRING" id="10090.ENSMUSP00000027297"/>
<dbReference type="GlyGen" id="Q9QZC7">
    <property type="glycosylation" value="1 site"/>
</dbReference>
<dbReference type="iPTMnet" id="Q9QZC7"/>
<dbReference type="PhosphoSitePlus" id="Q9QZC7"/>
<dbReference type="PaxDb" id="10090-ENSMUSP00000027297"/>
<dbReference type="ProteomicsDB" id="289508">
    <molecule id="Q9QZC7-1"/>
</dbReference>
<dbReference type="ProteomicsDB" id="289509">
    <molecule id="Q9QZC7-2"/>
</dbReference>
<dbReference type="ProteomicsDB" id="289510">
    <molecule id="Q9QZC7-3"/>
</dbReference>
<dbReference type="Antibodypedia" id="35075">
    <property type="antibodies" value="65 antibodies from 20 providers"/>
</dbReference>
<dbReference type="DNASU" id="226971"/>
<dbReference type="Ensembl" id="ENSMUST00000027297.11">
    <molecule id="Q9QZC7-1"/>
    <property type="protein sequence ID" value="ENSMUSP00000027297.5"/>
    <property type="gene ID" value="ENSMUSG00000026123.12"/>
</dbReference>
<dbReference type="Ensembl" id="ENSMUST00000156687.8">
    <molecule id="Q9QZC7-3"/>
    <property type="protein sequence ID" value="ENSMUSP00000140475.2"/>
    <property type="gene ID" value="ENSMUSG00000026123.12"/>
</dbReference>
<dbReference type="GeneID" id="226971"/>
<dbReference type="KEGG" id="mmu:226971"/>
<dbReference type="UCSC" id="uc007apl.1">
    <molecule id="Q9QZC7-1"/>
    <property type="organism name" value="mouse"/>
</dbReference>
<dbReference type="AGR" id="MGI:2385825"/>
<dbReference type="CTD" id="55041"/>
<dbReference type="MGI" id="MGI:2385825">
    <property type="gene designation" value="Plekhb2"/>
</dbReference>
<dbReference type="VEuPathDB" id="HostDB:ENSMUSG00000026123"/>
<dbReference type="eggNOG" id="ENOG502R270">
    <property type="taxonomic scope" value="Eukaryota"/>
</dbReference>
<dbReference type="GeneTree" id="ENSGT00390000013989"/>
<dbReference type="HOGENOM" id="CLU_102020_0_0_1"/>
<dbReference type="InParanoid" id="Q9QZC7"/>
<dbReference type="OMA" id="YIGSEVM"/>
<dbReference type="OrthoDB" id="2157866at2759"/>
<dbReference type="PhylomeDB" id="Q9QZC7"/>
<dbReference type="TreeFam" id="TF331787"/>
<dbReference type="BioGRID-ORCS" id="226971">
    <property type="hits" value="2 hits in 77 CRISPR screens"/>
</dbReference>
<dbReference type="ChiTaRS" id="Plekhb2">
    <property type="organism name" value="mouse"/>
</dbReference>
<dbReference type="EvolutionaryTrace" id="Q9QZC7"/>
<dbReference type="PRO" id="PR:Q9QZC7"/>
<dbReference type="Proteomes" id="UP000000589">
    <property type="component" value="Chromosome 1"/>
</dbReference>
<dbReference type="RNAct" id="Q9QZC7">
    <property type="molecule type" value="protein"/>
</dbReference>
<dbReference type="Bgee" id="ENSMUSG00000026123">
    <property type="expression patterns" value="Expressed in choroid plexus of fourth ventricle and 249 other cell types or tissues"/>
</dbReference>
<dbReference type="ExpressionAtlas" id="Q9QZC7">
    <property type="expression patterns" value="baseline and differential"/>
</dbReference>
<dbReference type="GO" id="GO:0055038">
    <property type="term" value="C:recycling endosome membrane"/>
    <property type="evidence" value="ECO:0007669"/>
    <property type="project" value="UniProtKB-SubCell"/>
</dbReference>
<dbReference type="GO" id="GO:0005547">
    <property type="term" value="F:phosphatidylinositol-3,4,5-trisphosphate binding"/>
    <property type="evidence" value="ECO:0007669"/>
    <property type="project" value="Ensembl"/>
</dbReference>
<dbReference type="CDD" id="cd13265">
    <property type="entry name" value="PH_evt"/>
    <property type="match status" value="1"/>
</dbReference>
<dbReference type="FunFam" id="2.30.29.30:FF:000073">
    <property type="entry name" value="Pleckstrin homology domain-containing family B member 2"/>
    <property type="match status" value="1"/>
</dbReference>
<dbReference type="Gene3D" id="2.30.29.30">
    <property type="entry name" value="Pleckstrin-homology domain (PH domain)/Phosphotyrosine-binding domain (PTB)"/>
    <property type="match status" value="1"/>
</dbReference>
<dbReference type="InterPro" id="IPR011993">
    <property type="entry name" value="PH-like_dom_sf"/>
</dbReference>
<dbReference type="InterPro" id="IPR001849">
    <property type="entry name" value="PH_domain"/>
</dbReference>
<dbReference type="InterPro" id="IPR039680">
    <property type="entry name" value="PLEKHB1/2"/>
</dbReference>
<dbReference type="PANTHER" id="PTHR14309">
    <property type="entry name" value="EXPRESSED PROTEIN"/>
    <property type="match status" value="1"/>
</dbReference>
<dbReference type="PANTHER" id="PTHR14309:SF8">
    <property type="entry name" value="PLECKSTRIN HOMOLOGY DOMAIN-CONTAINING FAMILY B MEMBER 2"/>
    <property type="match status" value="1"/>
</dbReference>
<dbReference type="Pfam" id="PF00169">
    <property type="entry name" value="PH"/>
    <property type="match status" value="1"/>
</dbReference>
<dbReference type="SMART" id="SM00233">
    <property type="entry name" value="PH"/>
    <property type="match status" value="1"/>
</dbReference>
<dbReference type="SUPFAM" id="SSF50729">
    <property type="entry name" value="PH domain-like"/>
    <property type="match status" value="1"/>
</dbReference>
<dbReference type="PROSITE" id="PS50003">
    <property type="entry name" value="PH_DOMAIN"/>
    <property type="match status" value="1"/>
</dbReference>
<gene>
    <name type="primary">Plekhb2</name>
    <name type="synonym">Evt2</name>
</gene>